<dbReference type="EC" id="7.-.-.-" evidence="1"/>
<dbReference type="EMBL" id="CP000469">
    <property type="protein sequence ID" value="ABK48398.1"/>
    <property type="molecule type" value="Genomic_DNA"/>
</dbReference>
<dbReference type="SMR" id="A0KX79"/>
<dbReference type="STRING" id="94122.Shewana3_2168"/>
<dbReference type="KEGG" id="shn:Shewana3_2168"/>
<dbReference type="eggNOG" id="COG4657">
    <property type="taxonomic scope" value="Bacteria"/>
</dbReference>
<dbReference type="HOGENOM" id="CLU_095255_1_0_6"/>
<dbReference type="OrthoDB" id="9803631at2"/>
<dbReference type="Proteomes" id="UP000002589">
    <property type="component" value="Chromosome"/>
</dbReference>
<dbReference type="GO" id="GO:0005886">
    <property type="term" value="C:plasma membrane"/>
    <property type="evidence" value="ECO:0007669"/>
    <property type="project" value="UniProtKB-SubCell"/>
</dbReference>
<dbReference type="GO" id="GO:0022900">
    <property type="term" value="P:electron transport chain"/>
    <property type="evidence" value="ECO:0007669"/>
    <property type="project" value="UniProtKB-UniRule"/>
</dbReference>
<dbReference type="HAMAP" id="MF_00459">
    <property type="entry name" value="RsxA_RnfA"/>
    <property type="match status" value="1"/>
</dbReference>
<dbReference type="InterPro" id="IPR011293">
    <property type="entry name" value="Ion_transpt_RnfA/RsxA"/>
</dbReference>
<dbReference type="InterPro" id="IPR003667">
    <property type="entry name" value="NqrDE/RnfAE"/>
</dbReference>
<dbReference type="InterPro" id="IPR050133">
    <property type="entry name" value="NqrDE/RnfAE_oxidrdctase"/>
</dbReference>
<dbReference type="NCBIfam" id="NF003481">
    <property type="entry name" value="PRK05151.1"/>
    <property type="match status" value="1"/>
</dbReference>
<dbReference type="NCBIfam" id="TIGR01943">
    <property type="entry name" value="rnfA"/>
    <property type="match status" value="1"/>
</dbReference>
<dbReference type="PANTHER" id="PTHR30335">
    <property type="entry name" value="INTEGRAL MEMBRANE PROTEIN OF SOXR-REDUCING COMPLEX"/>
    <property type="match status" value="1"/>
</dbReference>
<dbReference type="PANTHER" id="PTHR30335:SF0">
    <property type="entry name" value="ION-TRANSLOCATING OXIDOREDUCTASE COMPLEX SUBUNIT A"/>
    <property type="match status" value="1"/>
</dbReference>
<dbReference type="Pfam" id="PF02508">
    <property type="entry name" value="Rnf-Nqr"/>
    <property type="match status" value="1"/>
</dbReference>
<dbReference type="PIRSF" id="PIRSF006102">
    <property type="entry name" value="NQR_DE"/>
    <property type="match status" value="1"/>
</dbReference>
<accession>A0KX79</accession>
<evidence type="ECO:0000255" key="1">
    <source>
        <dbReference type="HAMAP-Rule" id="MF_00459"/>
    </source>
</evidence>
<name>RNFA_SHESA</name>
<protein>
    <recommendedName>
        <fullName evidence="1">Ion-translocating oxidoreductase complex subunit A</fullName>
        <ecNumber evidence="1">7.-.-.-</ecNumber>
    </recommendedName>
    <alternativeName>
        <fullName evidence="1">Rnf electron transport complex subunit A</fullName>
    </alternativeName>
</protein>
<gene>
    <name evidence="1" type="primary">rnfA</name>
    <name type="ordered locus">Shewana3_2168</name>
</gene>
<proteinExistence type="inferred from homology"/>
<keyword id="KW-0997">Cell inner membrane</keyword>
<keyword id="KW-1003">Cell membrane</keyword>
<keyword id="KW-0249">Electron transport</keyword>
<keyword id="KW-0472">Membrane</keyword>
<keyword id="KW-1278">Translocase</keyword>
<keyword id="KW-0812">Transmembrane</keyword>
<keyword id="KW-1133">Transmembrane helix</keyword>
<keyword id="KW-0813">Transport</keyword>
<feature type="chain" id="PRO_1000013552" description="Ion-translocating oxidoreductase complex subunit A">
    <location>
        <begin position="1"/>
        <end position="192"/>
    </location>
</feature>
<feature type="transmembrane region" description="Helical" evidence="1">
    <location>
        <begin position="5"/>
        <end position="25"/>
    </location>
</feature>
<feature type="transmembrane region" description="Helical" evidence="1">
    <location>
        <begin position="39"/>
        <end position="59"/>
    </location>
</feature>
<feature type="transmembrane region" description="Helical" evidence="1">
    <location>
        <begin position="65"/>
        <end position="85"/>
    </location>
</feature>
<feature type="transmembrane region" description="Helical" evidence="1">
    <location>
        <begin position="102"/>
        <end position="122"/>
    </location>
</feature>
<feature type="transmembrane region" description="Helical" evidence="1">
    <location>
        <begin position="134"/>
        <end position="154"/>
    </location>
</feature>
<feature type="transmembrane region" description="Helical" evidence="1">
    <location>
        <begin position="171"/>
        <end position="191"/>
    </location>
</feature>
<organism>
    <name type="scientific">Shewanella sp. (strain ANA-3)</name>
    <dbReference type="NCBI Taxonomy" id="94122"/>
    <lineage>
        <taxon>Bacteria</taxon>
        <taxon>Pseudomonadati</taxon>
        <taxon>Pseudomonadota</taxon>
        <taxon>Gammaproteobacteria</taxon>
        <taxon>Alteromonadales</taxon>
        <taxon>Shewanellaceae</taxon>
        <taxon>Shewanella</taxon>
    </lineage>
</organism>
<reference key="1">
    <citation type="submission" date="2006-09" db="EMBL/GenBank/DDBJ databases">
        <title>Complete sequence of chromosome 1 of Shewanella sp. ANA-3.</title>
        <authorList>
            <person name="Copeland A."/>
            <person name="Lucas S."/>
            <person name="Lapidus A."/>
            <person name="Barry K."/>
            <person name="Detter J.C."/>
            <person name="Glavina del Rio T."/>
            <person name="Hammon N."/>
            <person name="Israni S."/>
            <person name="Dalin E."/>
            <person name="Tice H."/>
            <person name="Pitluck S."/>
            <person name="Chertkov O."/>
            <person name="Brettin T."/>
            <person name="Bruce D."/>
            <person name="Han C."/>
            <person name="Tapia R."/>
            <person name="Gilna P."/>
            <person name="Schmutz J."/>
            <person name="Larimer F."/>
            <person name="Land M."/>
            <person name="Hauser L."/>
            <person name="Kyrpides N."/>
            <person name="Kim E."/>
            <person name="Newman D."/>
            <person name="Salticov C."/>
            <person name="Konstantinidis K."/>
            <person name="Klappenback J."/>
            <person name="Tiedje J."/>
            <person name="Richardson P."/>
        </authorList>
    </citation>
    <scope>NUCLEOTIDE SEQUENCE [LARGE SCALE GENOMIC DNA]</scope>
    <source>
        <strain>ANA-3</strain>
    </source>
</reference>
<sequence>MSEYLLLLISTVLVNNFVLVKFLGLCPFMGVSSKLESAIGMSMATTFVLTLASILSYLVNQYLLLPFDLSYLRTMSFILVIAVVVQFTEMVVQKTSASLHRALGIYLPLITTNCAVLGVALLNVNEKHDFIQSAIYGFGAAVGFSLVLILFSAMRERLAAADVPMPFKGGAIAMITAGLMSLAFMGFTGLVK</sequence>
<comment type="function">
    <text evidence="1">Part of a membrane-bound complex that couples electron transfer with translocation of ions across the membrane.</text>
</comment>
<comment type="subunit">
    <text evidence="1">The complex is composed of six subunits: RnfA, RnfB, RnfC, RnfD, RnfE and RnfG.</text>
</comment>
<comment type="subcellular location">
    <subcellularLocation>
        <location evidence="1">Cell inner membrane</location>
        <topology evidence="1">Multi-pass membrane protein</topology>
    </subcellularLocation>
</comment>
<comment type="similarity">
    <text evidence="1">Belongs to the NqrDE/RnfAE family.</text>
</comment>